<proteinExistence type="inferred from homology"/>
<keyword id="KW-0244">Early protein</keyword>
<keyword id="KW-1185">Reference proteome</keyword>
<dbReference type="EMBL" id="K02708">
    <property type="status" value="NOT_ANNOTATED_CDS"/>
    <property type="molecule type" value="Genomic_DNA"/>
</dbReference>
<dbReference type="SMR" id="P03125"/>
<dbReference type="Proteomes" id="UP000008787">
    <property type="component" value="Segment"/>
</dbReference>
<dbReference type="InterPro" id="IPR035149">
    <property type="entry name" value="DUF5479"/>
</dbReference>
<dbReference type="Pfam" id="PF17575">
    <property type="entry name" value="DUF5479"/>
    <property type="match status" value="1"/>
</dbReference>
<organism>
    <name type="scientific">Cottontail rabbit papillomavirus (strain Kansas)</name>
    <name type="common">CRPV</name>
    <name type="synonym">Papillomavirus sylvilagi</name>
    <dbReference type="NCBI Taxonomy" id="31553"/>
    <lineage>
        <taxon>Viruses</taxon>
        <taxon>Monodnaviria</taxon>
        <taxon>Shotokuvirae</taxon>
        <taxon>Cossaviricota</taxon>
        <taxon>Papovaviricetes</taxon>
        <taxon>Zurhausenvirales</taxon>
        <taxon>Papillomaviridae</taxon>
        <taxon>Firstpapillomavirinae</taxon>
        <taxon>Kappapapillomavirus</taxon>
        <taxon>Kappapapillomavirus 2</taxon>
    </lineage>
</organism>
<evidence type="ECO:0000305" key="1"/>
<organismHost>
    <name type="scientific">Sylvilagus floridanus</name>
    <name type="common">Cottontail rabbit</name>
    <dbReference type="NCBI Taxonomy" id="9988"/>
</organismHost>
<feature type="chain" id="PRO_0000133301" description="Probable protein E5">
    <location>
        <begin position="1"/>
        <end position="101"/>
    </location>
</feature>
<protein>
    <recommendedName>
        <fullName>Probable protein E5</fullName>
    </recommendedName>
</protein>
<comment type="function">
    <text>Not required for CRPV to induce papillomas, but may facilitate the functioning of other viral or cellular factors involved in the induction of papillomas.</text>
</comment>
<comment type="similarity">
    <text evidence="1">Belongs to the papillomaviridae E5 protein family.</text>
</comment>
<reference key="1">
    <citation type="journal article" date="1985" name="Proc. Natl. Acad. Sci. U.S.A.">
        <title>Genomic structure of the cottontail rabbit (Shope) papillomavirus.</title>
        <authorList>
            <person name="Giri I."/>
            <person name="Danos O."/>
            <person name="Yaniv M."/>
        </authorList>
    </citation>
    <scope>NUCLEOTIDE SEQUENCE [GENOMIC DNA]</scope>
</reference>
<gene>
    <name type="primary">E5</name>
</gene>
<sequence>MGFSDVYACNPFPSAAFVTQRFFVPINLAHTQKVSWLHGHENAGLHHKTFIQHAKLLAIAQLTYRINLKTKQLQIKFCSMAALVFSLEDLESVVPEVLGVD</sequence>
<name>VE5_CRPVK</name>
<accession>P03125</accession>